<feature type="chain" id="PRO_0000153509" description="Histidinol-phosphate aminotransferase">
    <location>
        <begin position="1"/>
        <end position="385"/>
    </location>
</feature>
<feature type="modified residue" description="N6-(pyridoxal phosphate)lysine" evidence="2">
    <location>
        <position position="230"/>
    </location>
</feature>
<feature type="sequence conflict" description="In Ref. 1; CAA29139." evidence="2" ref="1">
    <original>PGK</original>
    <variation>RE</variation>
    <location>
        <begin position="110"/>
        <end position="112"/>
    </location>
</feature>
<feature type="sequence conflict" description="In Ref. 1; CAA29139." evidence="2" ref="1">
    <original>Y</original>
    <variation>S</variation>
    <location>
        <position position="125"/>
    </location>
</feature>
<feature type="sequence conflict" description="In Ref. 1; CAA29139." evidence="2" ref="1">
    <original>T</original>
    <variation>I</variation>
    <location>
        <position position="142"/>
    </location>
</feature>
<feature type="sequence conflict" description="In Ref. 1; CAA29139." evidence="2" ref="1">
    <original>R</original>
    <variation>L</variation>
    <location>
        <position position="294"/>
    </location>
</feature>
<evidence type="ECO:0000303" key="1">
    <source ref="4"/>
</evidence>
<evidence type="ECO:0000305" key="2"/>
<evidence type="ECO:0000305" key="3">
    <source>
    </source>
</evidence>
<proteinExistence type="evidence at protein level"/>
<accession>P07172</accession>
<accession>D6VVH1</accession>
<comment type="catalytic activity">
    <reaction evidence="3">
        <text>L-histidinol phosphate + 2-oxoglutarate = 3-(imidazol-4-yl)-2-oxopropyl phosphate + L-glutamate</text>
        <dbReference type="Rhea" id="RHEA:23744"/>
        <dbReference type="ChEBI" id="CHEBI:16810"/>
        <dbReference type="ChEBI" id="CHEBI:29985"/>
        <dbReference type="ChEBI" id="CHEBI:57766"/>
        <dbReference type="ChEBI" id="CHEBI:57980"/>
        <dbReference type="EC" id="2.6.1.9"/>
    </reaction>
</comment>
<comment type="cofactor">
    <cofactor>
        <name>pyridoxal 5'-phosphate</name>
        <dbReference type="ChEBI" id="CHEBI:597326"/>
    </cofactor>
</comment>
<comment type="pathway">
    <text evidence="3">Amino-acid biosynthesis; L-histidine biosynthesis; L-histidine from 5-phospho-alpha-D-ribose 1-diphosphate: step 7/9.</text>
</comment>
<comment type="similarity">
    <text evidence="2">Belongs to the class-II pyridoxal-phosphate-dependent aminotransferase family.</text>
</comment>
<reference key="1">
    <citation type="journal article" date="1987" name="Mol. Gen. Genet.">
        <title>Structure of the yeast HIS5 gene responsive to general control of amino acid biosynthesis.</title>
        <authorList>
            <person name="Nishiwaki K."/>
            <person name="Hayashi N."/>
            <person name="Irie S."/>
            <person name="Chung D.-H."/>
            <person name="Harashima S."/>
            <person name="Oshima Y."/>
        </authorList>
    </citation>
    <scope>NUCLEOTIDE SEQUENCE [GENOMIC DNA]</scope>
</reference>
<reference key="2">
    <citation type="journal article" date="1997" name="Nature">
        <title>The nucleotide sequence of Saccharomyces cerevisiae chromosome IX.</title>
        <authorList>
            <person name="Churcher C.M."/>
            <person name="Bowman S."/>
            <person name="Badcock K."/>
            <person name="Bankier A.T."/>
            <person name="Brown D."/>
            <person name="Chillingworth T."/>
            <person name="Connor R."/>
            <person name="Devlin K."/>
            <person name="Gentles S."/>
            <person name="Hamlin N."/>
            <person name="Harris D.E."/>
            <person name="Horsnell T."/>
            <person name="Hunt S."/>
            <person name="Jagels K."/>
            <person name="Jones M."/>
            <person name="Lye G."/>
            <person name="Moule S."/>
            <person name="Odell C."/>
            <person name="Pearson D."/>
            <person name="Rajandream M.A."/>
            <person name="Rice P."/>
            <person name="Rowley N."/>
            <person name="Skelton J."/>
            <person name="Smith V."/>
            <person name="Walsh S.V."/>
            <person name="Whitehead S."/>
            <person name="Barrell B.G."/>
        </authorList>
    </citation>
    <scope>NUCLEOTIDE SEQUENCE [LARGE SCALE GENOMIC DNA]</scope>
    <source>
        <strain>ATCC 204508 / S288c</strain>
    </source>
</reference>
<reference key="3">
    <citation type="journal article" date="2014" name="G3 (Bethesda)">
        <title>The reference genome sequence of Saccharomyces cerevisiae: Then and now.</title>
        <authorList>
            <person name="Engel S.R."/>
            <person name="Dietrich F.S."/>
            <person name="Fisk D.G."/>
            <person name="Binkley G."/>
            <person name="Balakrishnan R."/>
            <person name="Costanzo M.C."/>
            <person name="Dwight S.S."/>
            <person name="Hitz B.C."/>
            <person name="Karra K."/>
            <person name="Nash R.S."/>
            <person name="Weng S."/>
            <person name="Wong E.D."/>
            <person name="Lloyd P."/>
            <person name="Skrzypek M.S."/>
            <person name="Miyasato S.R."/>
            <person name="Simison M."/>
            <person name="Cherry J.M."/>
        </authorList>
    </citation>
    <scope>GENOME REANNOTATION</scope>
    <source>
        <strain>ATCC 204508 / S288c</strain>
    </source>
</reference>
<reference key="4">
    <citation type="journal article" date="1985" name="Sanop Misaengmul Hakhoe Chi">
        <title>Studies on the HIS5 gene of yeast: the nucleotide sequence of 5' upstream region of the HIS5 gene of Saccharomyces cerevisiae.</title>
        <authorList>
            <person name="Chung D.H."/>
            <person name="Nishiwaki K."/>
            <person name="Oshima Y."/>
        </authorList>
    </citation>
    <scope>NUCLEOTIDE SEQUENCE [GENOMIC DNA] OF 1-56</scope>
</reference>
<reference key="5">
    <citation type="journal article" date="1964" name="Science">
        <title>Gene-enzyme relations in histidine biosynthesis in yeast.</title>
        <authorList>
            <person name="Fink G.R."/>
        </authorList>
    </citation>
    <scope>CATALYTIC ACTIVITY</scope>
    <scope>PATHWAY</scope>
</reference>
<reference key="6">
    <citation type="journal article" date="2018" name="J. Proteome Res.">
        <title>Enrichment-based proteogenomics identifies microproteins, missing proteins, and novel smORFs in Saccharomyces cerevisiae.</title>
        <authorList>
            <person name="He C."/>
            <person name="Jia C."/>
            <person name="Zhang Y."/>
            <person name="Xu P."/>
        </authorList>
    </citation>
    <scope>IDENTIFICATION BY MASS SPECTROMETRY</scope>
</reference>
<sequence>MVFDLKRIVRPKIYNLEPYRCARDDFTEGILLDANENAHGPTPVELSKTNLHRYPDPHQLEFKTAMTKYRNKTSSYANDPEVKPLTADNLCLGVGSDESIDAIIRACCVPGKEKILVLPPTYSMYSVCANINDIEVVQCPLTVSDGSFQMDTEAVLTILKNDSLIKLMFVTSPGNPTGAKIKTSLIEKVLQNWDNGLVVVDEAYVDFCGGSTAPLVTKYPNLVTLQTLSKSFGLAGIRLGMTYATAELARILNAMKAPYNISSLASEYALKAVQDSNLKKMEATSKIINEEKMRLLKELTALDYVDDQYVGGLDANFLLIRINGGDNVLAKKLYYQLATQSGVVVRFRGNELGCSGCLRITVGTHEENTHLIKYFKETLYKLANE</sequence>
<keyword id="KW-0028">Amino-acid biosynthesis</keyword>
<keyword id="KW-0032">Aminotransferase</keyword>
<keyword id="KW-0368">Histidine biosynthesis</keyword>
<keyword id="KW-0663">Pyridoxal phosphate</keyword>
<keyword id="KW-1185">Reference proteome</keyword>
<keyword id="KW-0808">Transferase</keyword>
<organism>
    <name type="scientific">Saccharomyces cerevisiae (strain ATCC 204508 / S288c)</name>
    <name type="common">Baker's yeast</name>
    <dbReference type="NCBI Taxonomy" id="559292"/>
    <lineage>
        <taxon>Eukaryota</taxon>
        <taxon>Fungi</taxon>
        <taxon>Dikarya</taxon>
        <taxon>Ascomycota</taxon>
        <taxon>Saccharomycotina</taxon>
        <taxon>Saccharomycetes</taxon>
        <taxon>Saccharomycetales</taxon>
        <taxon>Saccharomycetaceae</taxon>
        <taxon>Saccharomyces</taxon>
    </lineage>
</organism>
<dbReference type="EC" id="2.6.1.9" evidence="3"/>
<dbReference type="EMBL" id="Z38125">
    <property type="protein sequence ID" value="CAA86264.1"/>
    <property type="molecule type" value="Genomic_DNA"/>
</dbReference>
<dbReference type="EMBL" id="X05650">
    <property type="protein sequence ID" value="CAA29139.1"/>
    <property type="molecule type" value="Genomic_DNA"/>
</dbReference>
<dbReference type="EMBL" id="M38613">
    <property type="protein sequence ID" value="AAA34675.1"/>
    <property type="molecule type" value="Genomic_DNA"/>
</dbReference>
<dbReference type="EMBL" id="BK006942">
    <property type="protein sequence ID" value="DAA08437.1"/>
    <property type="molecule type" value="Genomic_DNA"/>
</dbReference>
<dbReference type="PIR" id="S48456">
    <property type="entry name" value="S48456"/>
</dbReference>
<dbReference type="RefSeq" id="NP_012150.1">
    <property type="nucleotide sequence ID" value="NM_001179464.1"/>
</dbReference>
<dbReference type="SMR" id="P07172"/>
<dbReference type="BioGRID" id="34875">
    <property type="interactions" value="23"/>
</dbReference>
<dbReference type="FunCoup" id="P07172">
    <property type="interactions" value="275"/>
</dbReference>
<dbReference type="STRING" id="4932.YIL116W"/>
<dbReference type="GlyGen" id="P07172">
    <property type="glycosylation" value="1 site"/>
</dbReference>
<dbReference type="iPTMnet" id="P07172"/>
<dbReference type="PaxDb" id="4932-YIL116W"/>
<dbReference type="PeptideAtlas" id="P07172"/>
<dbReference type="TopDownProteomics" id="P07172"/>
<dbReference type="EnsemblFungi" id="YIL116W_mRNA">
    <property type="protein sequence ID" value="YIL116W"/>
    <property type="gene ID" value="YIL116W"/>
</dbReference>
<dbReference type="GeneID" id="854690"/>
<dbReference type="KEGG" id="sce:YIL116W"/>
<dbReference type="AGR" id="SGD:S000001378"/>
<dbReference type="SGD" id="S000001378">
    <property type="gene designation" value="HIS5"/>
</dbReference>
<dbReference type="VEuPathDB" id="FungiDB:YIL116W"/>
<dbReference type="eggNOG" id="KOG0633">
    <property type="taxonomic scope" value="Eukaryota"/>
</dbReference>
<dbReference type="HOGENOM" id="CLU_017584_3_1_1"/>
<dbReference type="InParanoid" id="P07172"/>
<dbReference type="OMA" id="NFVQFGR"/>
<dbReference type="OrthoDB" id="2015537at2759"/>
<dbReference type="BioCyc" id="YEAST:YIL116W-MONOMER"/>
<dbReference type="UniPathway" id="UPA00031">
    <property type="reaction ID" value="UER00012"/>
</dbReference>
<dbReference type="BioGRID-ORCS" id="854690">
    <property type="hits" value="2 hits in 10 CRISPR screens"/>
</dbReference>
<dbReference type="PRO" id="PR:P07172"/>
<dbReference type="Proteomes" id="UP000002311">
    <property type="component" value="Chromosome IX"/>
</dbReference>
<dbReference type="RNAct" id="P07172">
    <property type="molecule type" value="protein"/>
</dbReference>
<dbReference type="GO" id="GO:0005737">
    <property type="term" value="C:cytoplasm"/>
    <property type="evidence" value="ECO:0007005"/>
    <property type="project" value="SGD"/>
</dbReference>
<dbReference type="GO" id="GO:0004400">
    <property type="term" value="F:histidinol-phosphate transaminase activity"/>
    <property type="evidence" value="ECO:0000315"/>
    <property type="project" value="SGD"/>
</dbReference>
<dbReference type="GO" id="GO:0030170">
    <property type="term" value="F:pyridoxal phosphate binding"/>
    <property type="evidence" value="ECO:0007669"/>
    <property type="project" value="InterPro"/>
</dbReference>
<dbReference type="GO" id="GO:0000105">
    <property type="term" value="P:L-histidine biosynthetic process"/>
    <property type="evidence" value="ECO:0000315"/>
    <property type="project" value="SGD"/>
</dbReference>
<dbReference type="CDD" id="cd00609">
    <property type="entry name" value="AAT_like"/>
    <property type="match status" value="1"/>
</dbReference>
<dbReference type="FunFam" id="3.40.640.10:FF:000149">
    <property type="entry name" value="Histidinol-phosphate aminotransferase"/>
    <property type="match status" value="1"/>
</dbReference>
<dbReference type="Gene3D" id="3.90.1150.10">
    <property type="entry name" value="Aspartate Aminotransferase, domain 1"/>
    <property type="match status" value="1"/>
</dbReference>
<dbReference type="Gene3D" id="3.40.640.10">
    <property type="entry name" value="Type I PLP-dependent aspartate aminotransferase-like (Major domain)"/>
    <property type="match status" value="1"/>
</dbReference>
<dbReference type="HAMAP" id="MF_01023">
    <property type="entry name" value="HisC_aminotrans_2"/>
    <property type="match status" value="1"/>
</dbReference>
<dbReference type="InterPro" id="IPR001917">
    <property type="entry name" value="Aminotrans_II_pyridoxalP_BS"/>
</dbReference>
<dbReference type="InterPro" id="IPR004839">
    <property type="entry name" value="Aminotransferase_I/II_large"/>
</dbReference>
<dbReference type="InterPro" id="IPR005861">
    <property type="entry name" value="HisP_aminotrans"/>
</dbReference>
<dbReference type="InterPro" id="IPR015424">
    <property type="entry name" value="PyrdxlP-dep_Trfase"/>
</dbReference>
<dbReference type="InterPro" id="IPR015421">
    <property type="entry name" value="PyrdxlP-dep_Trfase_major"/>
</dbReference>
<dbReference type="InterPro" id="IPR015422">
    <property type="entry name" value="PyrdxlP-dep_Trfase_small"/>
</dbReference>
<dbReference type="NCBIfam" id="TIGR01141">
    <property type="entry name" value="hisC"/>
    <property type="match status" value="1"/>
</dbReference>
<dbReference type="PANTHER" id="PTHR42885:SF2">
    <property type="entry name" value="HISTIDINOL-PHOSPHATE AMINOTRANSFERASE"/>
    <property type="match status" value="1"/>
</dbReference>
<dbReference type="PANTHER" id="PTHR42885">
    <property type="entry name" value="HISTIDINOL-PHOSPHATE AMINOTRANSFERASE-RELATED"/>
    <property type="match status" value="1"/>
</dbReference>
<dbReference type="Pfam" id="PF00155">
    <property type="entry name" value="Aminotran_1_2"/>
    <property type="match status" value="1"/>
</dbReference>
<dbReference type="SUPFAM" id="SSF53383">
    <property type="entry name" value="PLP-dependent transferases"/>
    <property type="match status" value="1"/>
</dbReference>
<dbReference type="PROSITE" id="PS00599">
    <property type="entry name" value="AA_TRANSFER_CLASS_2"/>
    <property type="match status" value="1"/>
</dbReference>
<name>HIS8_YEAST</name>
<protein>
    <recommendedName>
        <fullName evidence="2">Histidinol-phosphate aminotransferase</fullName>
        <ecNumber evidence="3">2.6.1.9</ecNumber>
    </recommendedName>
    <alternativeName>
        <fullName>Imidazole acetol-phosphate transaminase</fullName>
    </alternativeName>
</protein>
<gene>
    <name evidence="1" type="primary">HIS5</name>
    <name type="ordered locus">YIL116W</name>
</gene>